<organism>
    <name type="scientific">Streptococcus pyogenes serotype M18 (strain MGAS8232)</name>
    <dbReference type="NCBI Taxonomy" id="186103"/>
    <lineage>
        <taxon>Bacteria</taxon>
        <taxon>Bacillati</taxon>
        <taxon>Bacillota</taxon>
        <taxon>Bacilli</taxon>
        <taxon>Lactobacillales</taxon>
        <taxon>Streptococcaceae</taxon>
        <taxon>Streptococcus</taxon>
    </lineage>
</organism>
<protein>
    <recommendedName>
        <fullName evidence="1">Putative pre-16S rRNA nuclease</fullName>
        <ecNumber evidence="1">3.1.-.-</ecNumber>
    </recommendedName>
</protein>
<accession>P67495</accession>
<accession>Q877W9</accession>
<accession>Q8K5K1</accession>
<accession>Q8NZ31</accession>
<feature type="chain" id="PRO_0000172154" description="Putative pre-16S rRNA nuclease">
    <location>
        <begin position="1"/>
        <end position="139"/>
    </location>
</feature>
<sequence>MRIMGLDVGSKTVGVAISDPLGFTAQGLEIIKIDEEKAEFGFTRLEELVKQYQVEQFVIGLPKNMNNTNGPRVDASITYGNHIEHLFGLPVHYQDERLTTVEAERMLIEQADISRGKRKKVIDKLAAQLILQNYLNRNF</sequence>
<comment type="function">
    <text evidence="1">Could be a nuclease involved in processing of the 5'-end of pre-16S rRNA.</text>
</comment>
<comment type="subcellular location">
    <subcellularLocation>
        <location evidence="1">Cytoplasm</location>
    </subcellularLocation>
</comment>
<comment type="similarity">
    <text evidence="1">Belongs to the YqgF nuclease family.</text>
</comment>
<dbReference type="EC" id="3.1.-.-" evidence="1"/>
<dbReference type="EMBL" id="AE009949">
    <property type="protein sequence ID" value="AAL98615.1"/>
    <property type="molecule type" value="Genomic_DNA"/>
</dbReference>
<dbReference type="SMR" id="P67495"/>
<dbReference type="KEGG" id="spm:spyM18_2171"/>
<dbReference type="HOGENOM" id="CLU_098240_2_0_9"/>
<dbReference type="GO" id="GO:0005829">
    <property type="term" value="C:cytosol"/>
    <property type="evidence" value="ECO:0007669"/>
    <property type="project" value="TreeGrafter"/>
</dbReference>
<dbReference type="GO" id="GO:0004518">
    <property type="term" value="F:nuclease activity"/>
    <property type="evidence" value="ECO:0007669"/>
    <property type="project" value="UniProtKB-KW"/>
</dbReference>
<dbReference type="GO" id="GO:0000967">
    <property type="term" value="P:rRNA 5'-end processing"/>
    <property type="evidence" value="ECO:0007669"/>
    <property type="project" value="UniProtKB-UniRule"/>
</dbReference>
<dbReference type="CDD" id="cd16964">
    <property type="entry name" value="YqgF"/>
    <property type="match status" value="1"/>
</dbReference>
<dbReference type="FunFam" id="3.30.420.140:FF:000003">
    <property type="entry name" value="Putative pre-16S rRNA nuclease"/>
    <property type="match status" value="1"/>
</dbReference>
<dbReference type="Gene3D" id="3.30.420.140">
    <property type="entry name" value="YqgF/RNase H-like domain"/>
    <property type="match status" value="1"/>
</dbReference>
<dbReference type="HAMAP" id="MF_00651">
    <property type="entry name" value="Nuclease_YqgF"/>
    <property type="match status" value="1"/>
</dbReference>
<dbReference type="InterPro" id="IPR012337">
    <property type="entry name" value="RNaseH-like_sf"/>
</dbReference>
<dbReference type="InterPro" id="IPR005227">
    <property type="entry name" value="YqgF"/>
</dbReference>
<dbReference type="InterPro" id="IPR006641">
    <property type="entry name" value="YqgF/RNaseH-like_dom"/>
</dbReference>
<dbReference type="InterPro" id="IPR037027">
    <property type="entry name" value="YqgF/RNaseH-like_dom_sf"/>
</dbReference>
<dbReference type="NCBIfam" id="TIGR00250">
    <property type="entry name" value="RNAse_H_YqgF"/>
    <property type="match status" value="1"/>
</dbReference>
<dbReference type="PANTHER" id="PTHR33317">
    <property type="entry name" value="POLYNUCLEOTIDYL TRANSFERASE, RIBONUCLEASE H-LIKE SUPERFAMILY PROTEIN"/>
    <property type="match status" value="1"/>
</dbReference>
<dbReference type="PANTHER" id="PTHR33317:SF4">
    <property type="entry name" value="POLYNUCLEOTIDYL TRANSFERASE, RIBONUCLEASE H-LIKE SUPERFAMILY PROTEIN"/>
    <property type="match status" value="1"/>
</dbReference>
<dbReference type="Pfam" id="PF03652">
    <property type="entry name" value="RuvX"/>
    <property type="match status" value="1"/>
</dbReference>
<dbReference type="SMART" id="SM00732">
    <property type="entry name" value="YqgFc"/>
    <property type="match status" value="1"/>
</dbReference>
<dbReference type="SUPFAM" id="SSF53098">
    <property type="entry name" value="Ribonuclease H-like"/>
    <property type="match status" value="1"/>
</dbReference>
<proteinExistence type="inferred from homology"/>
<reference key="1">
    <citation type="journal article" date="2002" name="Proc. Natl. Acad. Sci. U.S.A.">
        <title>Genome sequence and comparative microarray analysis of serotype M18 group A Streptococcus strains associated with acute rheumatic fever outbreaks.</title>
        <authorList>
            <person name="Smoot J.C."/>
            <person name="Barbian K.D."/>
            <person name="Van Gompel J.J."/>
            <person name="Smoot L.M."/>
            <person name="Chaussee M.S."/>
            <person name="Sylva G.L."/>
            <person name="Sturdevant D.E."/>
            <person name="Ricklefs S.M."/>
            <person name="Porcella S.F."/>
            <person name="Parkins L.D."/>
            <person name="Beres S.B."/>
            <person name="Campbell D.S."/>
            <person name="Smith T.M."/>
            <person name="Zhang Q."/>
            <person name="Kapur V."/>
            <person name="Daly J.A."/>
            <person name="Veasy L.G."/>
            <person name="Musser J.M."/>
        </authorList>
    </citation>
    <scope>NUCLEOTIDE SEQUENCE [LARGE SCALE GENOMIC DNA]</scope>
    <source>
        <strain>MGAS8232</strain>
    </source>
</reference>
<name>YQGF_STRP8</name>
<gene>
    <name type="ordered locus">spyM18_2171</name>
</gene>
<keyword id="KW-0963">Cytoplasm</keyword>
<keyword id="KW-0378">Hydrolase</keyword>
<keyword id="KW-0540">Nuclease</keyword>
<keyword id="KW-0690">Ribosome biogenesis</keyword>
<evidence type="ECO:0000255" key="1">
    <source>
        <dbReference type="HAMAP-Rule" id="MF_00651"/>
    </source>
</evidence>